<name>MADS5_ORYSI</name>
<protein>
    <recommendedName>
        <fullName>MADS-box transcription factor 5</fullName>
    </recommendedName>
    <alternativeName>
        <fullName>FDRMADS2</fullName>
    </alternativeName>
    <alternativeName>
        <fullName>OsMADS5</fullName>
    </alternativeName>
</protein>
<sequence>MGRGKVELKRIENKISRQVTFAKRRNGLLKKAYELSVLCDAEVALIIFSTRGRLFEFSTSSCMYKTLERYRSCNYNLNSCEASAALETELSNYQEYLKLKTRVEFLQTTQRNLLGEDLVPLSLKELEQLENQIEISLMNIRSSKNQQLLDQVFELKRKEQQLQDANKDLKRKIQETSGENMLHISCQDVGPSGHASEANQEFLHHAICDPSLHIGYQAYMDHLNQ</sequence>
<keyword id="KW-0238">DNA-binding</keyword>
<keyword id="KW-0539">Nucleus</keyword>
<keyword id="KW-1185">Reference proteome</keyword>
<keyword id="KW-0804">Transcription</keyword>
<keyword id="KW-0805">Transcription regulation</keyword>
<organism>
    <name type="scientific">Oryza sativa subsp. indica</name>
    <name type="common">Rice</name>
    <dbReference type="NCBI Taxonomy" id="39946"/>
    <lineage>
        <taxon>Eukaryota</taxon>
        <taxon>Viridiplantae</taxon>
        <taxon>Streptophyta</taxon>
        <taxon>Embryophyta</taxon>
        <taxon>Tracheophyta</taxon>
        <taxon>Spermatophyta</taxon>
        <taxon>Magnoliopsida</taxon>
        <taxon>Liliopsida</taxon>
        <taxon>Poales</taxon>
        <taxon>Poaceae</taxon>
        <taxon>BOP clade</taxon>
        <taxon>Oryzoideae</taxon>
        <taxon>Oryzeae</taxon>
        <taxon>Oryzinae</taxon>
        <taxon>Oryza</taxon>
        <taxon>Oryza sativa</taxon>
    </lineage>
</organism>
<dbReference type="EMBL" id="CM000131">
    <property type="protein sequence ID" value="EAY99800.1"/>
    <property type="molecule type" value="Genomic_DNA"/>
</dbReference>
<dbReference type="EMBL" id="AF141967">
    <property type="protein sequence ID" value="AAD38371.1"/>
    <property type="molecule type" value="mRNA"/>
</dbReference>
<dbReference type="SMR" id="A2Y9P0"/>
<dbReference type="STRING" id="39946.A2Y9P0"/>
<dbReference type="EnsemblPlants" id="BGIOSGA021849-TA">
    <property type="protein sequence ID" value="BGIOSGA021849-PA"/>
    <property type="gene ID" value="BGIOSGA021849"/>
</dbReference>
<dbReference type="EnsemblPlants" id="OsIR64_06g0004400.01">
    <property type="protein sequence ID" value="OsIR64_06g0004400.01"/>
    <property type="gene ID" value="OsIR64_06g0004400"/>
</dbReference>
<dbReference type="EnsemblPlants" id="OsLaMu_06g0004400.01">
    <property type="protein sequence ID" value="OsLaMu_06g0004400.01"/>
    <property type="gene ID" value="OsLaMu_06g0004400"/>
</dbReference>
<dbReference type="EnsemblPlants" id="OsLima_06g0004640.01">
    <property type="protein sequence ID" value="OsLima_06g0004640.01"/>
    <property type="gene ID" value="OsLima_06g0004640"/>
</dbReference>
<dbReference type="Gramene" id="BGIOSGA021849-TA">
    <property type="protein sequence ID" value="BGIOSGA021849-PA"/>
    <property type="gene ID" value="BGIOSGA021849"/>
</dbReference>
<dbReference type="Gramene" id="OsIR64_06g0004400.01">
    <property type="protein sequence ID" value="OsIR64_06g0004400.01"/>
    <property type="gene ID" value="OsIR64_06g0004400"/>
</dbReference>
<dbReference type="Gramene" id="OsLaMu_06g0004400.01">
    <property type="protein sequence ID" value="OsLaMu_06g0004400.01"/>
    <property type="gene ID" value="OsLaMu_06g0004400"/>
</dbReference>
<dbReference type="Gramene" id="OsLima_06g0004640.01">
    <property type="protein sequence ID" value="OsLima_06g0004640.01"/>
    <property type="gene ID" value="OsLima_06g0004640"/>
</dbReference>
<dbReference type="HOGENOM" id="CLU_053053_0_2_1"/>
<dbReference type="OMA" id="HASEDNQ"/>
<dbReference type="Proteomes" id="UP000007015">
    <property type="component" value="Chromosome 6"/>
</dbReference>
<dbReference type="GO" id="GO:0005634">
    <property type="term" value="C:nucleus"/>
    <property type="evidence" value="ECO:0007669"/>
    <property type="project" value="UniProtKB-SubCell"/>
</dbReference>
<dbReference type="GO" id="GO:0003700">
    <property type="term" value="F:DNA-binding transcription factor activity"/>
    <property type="evidence" value="ECO:0007669"/>
    <property type="project" value="InterPro"/>
</dbReference>
<dbReference type="GO" id="GO:0046983">
    <property type="term" value="F:protein dimerization activity"/>
    <property type="evidence" value="ECO:0007669"/>
    <property type="project" value="InterPro"/>
</dbReference>
<dbReference type="GO" id="GO:0000977">
    <property type="term" value="F:RNA polymerase II transcription regulatory region sequence-specific DNA binding"/>
    <property type="evidence" value="ECO:0007669"/>
    <property type="project" value="InterPro"/>
</dbReference>
<dbReference type="GO" id="GO:0045944">
    <property type="term" value="P:positive regulation of transcription by RNA polymerase II"/>
    <property type="evidence" value="ECO:0007669"/>
    <property type="project" value="InterPro"/>
</dbReference>
<dbReference type="CDD" id="cd00265">
    <property type="entry name" value="MADS_MEF2_like"/>
    <property type="match status" value="1"/>
</dbReference>
<dbReference type="FunFam" id="3.40.1810.10:FF:000008">
    <property type="entry name" value="MADS-box transcription factor 1"/>
    <property type="match status" value="1"/>
</dbReference>
<dbReference type="Gene3D" id="3.40.1810.10">
    <property type="entry name" value="Transcription factor, MADS-box"/>
    <property type="match status" value="1"/>
</dbReference>
<dbReference type="InterPro" id="IPR050142">
    <property type="entry name" value="MADS-box/MEF2_TF"/>
</dbReference>
<dbReference type="InterPro" id="IPR033896">
    <property type="entry name" value="MEF2-like_N"/>
</dbReference>
<dbReference type="InterPro" id="IPR002487">
    <property type="entry name" value="TF_Kbox"/>
</dbReference>
<dbReference type="InterPro" id="IPR002100">
    <property type="entry name" value="TF_MADSbox"/>
</dbReference>
<dbReference type="InterPro" id="IPR036879">
    <property type="entry name" value="TF_MADSbox_sf"/>
</dbReference>
<dbReference type="PANTHER" id="PTHR48019">
    <property type="entry name" value="SERUM RESPONSE FACTOR HOMOLOG"/>
    <property type="match status" value="1"/>
</dbReference>
<dbReference type="Pfam" id="PF01486">
    <property type="entry name" value="K-box"/>
    <property type="match status" value="1"/>
</dbReference>
<dbReference type="Pfam" id="PF00319">
    <property type="entry name" value="SRF-TF"/>
    <property type="match status" value="1"/>
</dbReference>
<dbReference type="PRINTS" id="PR00404">
    <property type="entry name" value="MADSDOMAIN"/>
</dbReference>
<dbReference type="SMART" id="SM00432">
    <property type="entry name" value="MADS"/>
    <property type="match status" value="1"/>
</dbReference>
<dbReference type="SUPFAM" id="SSF55455">
    <property type="entry name" value="SRF-like"/>
    <property type="match status" value="1"/>
</dbReference>
<dbReference type="PROSITE" id="PS51297">
    <property type="entry name" value="K_BOX"/>
    <property type="match status" value="1"/>
</dbReference>
<dbReference type="PROSITE" id="PS00350">
    <property type="entry name" value="MADS_BOX_1"/>
    <property type="match status" value="1"/>
</dbReference>
<dbReference type="PROSITE" id="PS50066">
    <property type="entry name" value="MADS_BOX_2"/>
    <property type="match status" value="1"/>
</dbReference>
<comment type="function">
    <text>Probable transcription factor.</text>
</comment>
<comment type="subunit">
    <text evidence="1">May interact with the K-box of MADS6.</text>
</comment>
<comment type="subcellular location">
    <subcellularLocation>
        <location evidence="4">Nucleus</location>
    </subcellularLocation>
</comment>
<proteinExistence type="evidence at transcript level"/>
<gene>
    <name type="primary">MADS5</name>
    <name type="ORF">OsI_021033</name>
</gene>
<reference key="1">
    <citation type="journal article" date="2005" name="PLoS Biol.">
        <title>The genomes of Oryza sativa: a history of duplications.</title>
        <authorList>
            <person name="Yu J."/>
            <person name="Wang J."/>
            <person name="Lin W."/>
            <person name="Li S."/>
            <person name="Li H."/>
            <person name="Zhou J."/>
            <person name="Ni P."/>
            <person name="Dong W."/>
            <person name="Hu S."/>
            <person name="Zeng C."/>
            <person name="Zhang J."/>
            <person name="Zhang Y."/>
            <person name="Li R."/>
            <person name="Xu Z."/>
            <person name="Li S."/>
            <person name="Li X."/>
            <person name="Zheng H."/>
            <person name="Cong L."/>
            <person name="Lin L."/>
            <person name="Yin J."/>
            <person name="Geng J."/>
            <person name="Li G."/>
            <person name="Shi J."/>
            <person name="Liu J."/>
            <person name="Lv H."/>
            <person name="Li J."/>
            <person name="Wang J."/>
            <person name="Deng Y."/>
            <person name="Ran L."/>
            <person name="Shi X."/>
            <person name="Wang X."/>
            <person name="Wu Q."/>
            <person name="Li C."/>
            <person name="Ren X."/>
            <person name="Wang J."/>
            <person name="Wang X."/>
            <person name="Li D."/>
            <person name="Liu D."/>
            <person name="Zhang X."/>
            <person name="Ji Z."/>
            <person name="Zhao W."/>
            <person name="Sun Y."/>
            <person name="Zhang Z."/>
            <person name="Bao J."/>
            <person name="Han Y."/>
            <person name="Dong L."/>
            <person name="Ji J."/>
            <person name="Chen P."/>
            <person name="Wu S."/>
            <person name="Liu J."/>
            <person name="Xiao Y."/>
            <person name="Bu D."/>
            <person name="Tan J."/>
            <person name="Yang L."/>
            <person name="Ye C."/>
            <person name="Zhang J."/>
            <person name="Xu J."/>
            <person name="Zhou Y."/>
            <person name="Yu Y."/>
            <person name="Zhang B."/>
            <person name="Zhuang S."/>
            <person name="Wei H."/>
            <person name="Liu B."/>
            <person name="Lei M."/>
            <person name="Yu H."/>
            <person name="Li Y."/>
            <person name="Xu H."/>
            <person name="Wei S."/>
            <person name="He X."/>
            <person name="Fang L."/>
            <person name="Zhang Z."/>
            <person name="Zhang Y."/>
            <person name="Huang X."/>
            <person name="Su Z."/>
            <person name="Tong W."/>
            <person name="Li J."/>
            <person name="Tong Z."/>
            <person name="Li S."/>
            <person name="Ye J."/>
            <person name="Wang L."/>
            <person name="Fang L."/>
            <person name="Lei T."/>
            <person name="Chen C.-S."/>
            <person name="Chen H.-C."/>
            <person name="Xu Z."/>
            <person name="Li H."/>
            <person name="Huang H."/>
            <person name="Zhang F."/>
            <person name="Xu H."/>
            <person name="Li N."/>
            <person name="Zhao C."/>
            <person name="Li S."/>
            <person name="Dong L."/>
            <person name="Huang Y."/>
            <person name="Li L."/>
            <person name="Xi Y."/>
            <person name="Qi Q."/>
            <person name="Li W."/>
            <person name="Zhang B."/>
            <person name="Hu W."/>
            <person name="Zhang Y."/>
            <person name="Tian X."/>
            <person name="Jiao Y."/>
            <person name="Liang X."/>
            <person name="Jin J."/>
            <person name="Gao L."/>
            <person name="Zheng W."/>
            <person name="Hao B."/>
            <person name="Liu S.-M."/>
            <person name="Wang W."/>
            <person name="Yuan L."/>
            <person name="Cao M."/>
            <person name="McDermott J."/>
            <person name="Samudrala R."/>
            <person name="Wang J."/>
            <person name="Wong G.K.-S."/>
            <person name="Yang H."/>
        </authorList>
    </citation>
    <scope>NUCLEOTIDE SEQUENCE [LARGE SCALE GENOMIC DNA]</scope>
    <source>
        <strain>cv. 93-11</strain>
    </source>
</reference>
<reference key="2">
    <citation type="submission" date="1999-04" db="EMBL/GenBank/DDBJ databases">
        <title>Oryza sativa MADS-box protein FDRMADS2.</title>
        <authorList>
            <person name="Jia H.-W."/>
            <person name="Cong B."/>
            <person name="Shao J."/>
            <person name="Sun C.-R."/>
        </authorList>
    </citation>
    <scope>NUCLEOTIDE SEQUENCE [MRNA] OF 12-225</scope>
    <source>
        <strain>cv. Guang-Lu-Ai No.4</strain>
    </source>
</reference>
<accession>A2Y9P0</accession>
<accession>O03999</accession>
<accession>Q7GCP2</accession>
<accession>Q9SWQ4</accession>
<evidence type="ECO:0000250" key="1"/>
<evidence type="ECO:0000255" key="2">
    <source>
        <dbReference type="PROSITE-ProRule" id="PRU00251"/>
    </source>
</evidence>
<evidence type="ECO:0000255" key="3">
    <source>
        <dbReference type="PROSITE-ProRule" id="PRU00629"/>
    </source>
</evidence>
<evidence type="ECO:0000305" key="4"/>
<feature type="chain" id="PRO_0000296347" description="MADS-box transcription factor 5">
    <location>
        <begin position="1"/>
        <end position="225"/>
    </location>
</feature>
<feature type="domain" description="MADS-box" evidence="2">
    <location>
        <begin position="1"/>
        <end position="61"/>
    </location>
</feature>
<feature type="domain" description="K-box" evidence="3">
    <location>
        <begin position="89"/>
        <end position="179"/>
    </location>
</feature>
<feature type="sequence conflict" description="In Ref. 2; AAD38371." evidence="4" ref="2">
    <original>IS</original>
    <variation>MN</variation>
    <location>
        <begin position="15"/>
        <end position="16"/>
    </location>
</feature>
<feature type="sequence conflict" description="In Ref. 2; AAD38371." evidence="4" ref="2">
    <original>S</original>
    <variation>F</variation>
    <location>
        <position position="185"/>
    </location>
</feature>